<name>SYC_PSEF5</name>
<accession>Q4K9S1</accession>
<protein>
    <recommendedName>
        <fullName evidence="1">Cysteine--tRNA ligase</fullName>
        <ecNumber evidence="1">6.1.1.16</ecNumber>
    </recommendedName>
    <alternativeName>
        <fullName evidence="1">Cysteinyl-tRNA synthetase</fullName>
        <shortName evidence="1">CysRS</shortName>
    </alternativeName>
</protein>
<reference key="1">
    <citation type="journal article" date="2005" name="Nat. Biotechnol.">
        <title>Complete genome sequence of the plant commensal Pseudomonas fluorescens Pf-5.</title>
        <authorList>
            <person name="Paulsen I.T."/>
            <person name="Press C.M."/>
            <person name="Ravel J."/>
            <person name="Kobayashi D.Y."/>
            <person name="Myers G.S.A."/>
            <person name="Mavrodi D.V."/>
            <person name="DeBoy R.T."/>
            <person name="Seshadri R."/>
            <person name="Ren Q."/>
            <person name="Madupu R."/>
            <person name="Dodson R.J."/>
            <person name="Durkin A.S."/>
            <person name="Brinkac L.M."/>
            <person name="Daugherty S.C."/>
            <person name="Sullivan S.A."/>
            <person name="Rosovitz M.J."/>
            <person name="Gwinn M.L."/>
            <person name="Zhou L."/>
            <person name="Schneider D.J."/>
            <person name="Cartinhour S.W."/>
            <person name="Nelson W.C."/>
            <person name="Weidman J."/>
            <person name="Watkins K."/>
            <person name="Tran K."/>
            <person name="Khouri H."/>
            <person name="Pierson E.A."/>
            <person name="Pierson L.S. III"/>
            <person name="Thomashow L.S."/>
            <person name="Loper J.E."/>
        </authorList>
    </citation>
    <scope>NUCLEOTIDE SEQUENCE [LARGE SCALE GENOMIC DNA]</scope>
    <source>
        <strain>ATCC BAA-477 / NRRL B-23932 / Pf-5</strain>
    </source>
</reference>
<comment type="catalytic activity">
    <reaction evidence="1">
        <text>tRNA(Cys) + L-cysteine + ATP = L-cysteinyl-tRNA(Cys) + AMP + diphosphate</text>
        <dbReference type="Rhea" id="RHEA:17773"/>
        <dbReference type="Rhea" id="RHEA-COMP:9661"/>
        <dbReference type="Rhea" id="RHEA-COMP:9679"/>
        <dbReference type="ChEBI" id="CHEBI:30616"/>
        <dbReference type="ChEBI" id="CHEBI:33019"/>
        <dbReference type="ChEBI" id="CHEBI:35235"/>
        <dbReference type="ChEBI" id="CHEBI:78442"/>
        <dbReference type="ChEBI" id="CHEBI:78517"/>
        <dbReference type="ChEBI" id="CHEBI:456215"/>
        <dbReference type="EC" id="6.1.1.16"/>
    </reaction>
</comment>
<comment type="cofactor">
    <cofactor evidence="1">
        <name>Zn(2+)</name>
        <dbReference type="ChEBI" id="CHEBI:29105"/>
    </cofactor>
    <text evidence="1">Binds 1 zinc ion per subunit.</text>
</comment>
<comment type="subunit">
    <text evidence="1">Monomer.</text>
</comment>
<comment type="subcellular location">
    <subcellularLocation>
        <location evidence="1">Cytoplasm</location>
    </subcellularLocation>
</comment>
<comment type="similarity">
    <text evidence="1">Belongs to the class-I aminoacyl-tRNA synthetase family.</text>
</comment>
<gene>
    <name evidence="1" type="primary">cysS</name>
    <name type="ordered locus">PFL_3912</name>
</gene>
<dbReference type="EC" id="6.1.1.16" evidence="1"/>
<dbReference type="EMBL" id="CP000076">
    <property type="protein sequence ID" value="AAY93176.1"/>
    <property type="molecule type" value="Genomic_DNA"/>
</dbReference>
<dbReference type="RefSeq" id="WP_011062199.1">
    <property type="nucleotide sequence ID" value="NC_004129.6"/>
</dbReference>
<dbReference type="SMR" id="Q4K9S1"/>
<dbReference type="STRING" id="220664.PFL_3912"/>
<dbReference type="KEGG" id="pfl:PFL_3912"/>
<dbReference type="PATRIC" id="fig|220664.5.peg.4009"/>
<dbReference type="eggNOG" id="COG0215">
    <property type="taxonomic scope" value="Bacteria"/>
</dbReference>
<dbReference type="HOGENOM" id="CLU_013528_0_1_6"/>
<dbReference type="Proteomes" id="UP000008540">
    <property type="component" value="Chromosome"/>
</dbReference>
<dbReference type="GO" id="GO:0005829">
    <property type="term" value="C:cytosol"/>
    <property type="evidence" value="ECO:0007669"/>
    <property type="project" value="TreeGrafter"/>
</dbReference>
<dbReference type="GO" id="GO:0005524">
    <property type="term" value="F:ATP binding"/>
    <property type="evidence" value="ECO:0007669"/>
    <property type="project" value="UniProtKB-UniRule"/>
</dbReference>
<dbReference type="GO" id="GO:0004817">
    <property type="term" value="F:cysteine-tRNA ligase activity"/>
    <property type="evidence" value="ECO:0007669"/>
    <property type="project" value="UniProtKB-UniRule"/>
</dbReference>
<dbReference type="GO" id="GO:0008270">
    <property type="term" value="F:zinc ion binding"/>
    <property type="evidence" value="ECO:0007669"/>
    <property type="project" value="UniProtKB-UniRule"/>
</dbReference>
<dbReference type="GO" id="GO:0006423">
    <property type="term" value="P:cysteinyl-tRNA aminoacylation"/>
    <property type="evidence" value="ECO:0007669"/>
    <property type="project" value="UniProtKB-UniRule"/>
</dbReference>
<dbReference type="CDD" id="cd07963">
    <property type="entry name" value="Anticodon_Ia_Cys"/>
    <property type="match status" value="1"/>
</dbReference>
<dbReference type="CDD" id="cd00672">
    <property type="entry name" value="CysRS_core"/>
    <property type="match status" value="1"/>
</dbReference>
<dbReference type="FunFam" id="3.40.50.620:FF:000009">
    <property type="entry name" value="Cysteine--tRNA ligase"/>
    <property type="match status" value="1"/>
</dbReference>
<dbReference type="Gene3D" id="1.20.120.1910">
    <property type="entry name" value="Cysteine-tRNA ligase, C-terminal anti-codon recognition domain"/>
    <property type="match status" value="1"/>
</dbReference>
<dbReference type="Gene3D" id="3.40.50.620">
    <property type="entry name" value="HUPs"/>
    <property type="match status" value="1"/>
</dbReference>
<dbReference type="HAMAP" id="MF_00041">
    <property type="entry name" value="Cys_tRNA_synth"/>
    <property type="match status" value="1"/>
</dbReference>
<dbReference type="InterPro" id="IPR015803">
    <property type="entry name" value="Cys-tRNA-ligase"/>
</dbReference>
<dbReference type="InterPro" id="IPR015273">
    <property type="entry name" value="Cys-tRNA-synt_Ia_DALR"/>
</dbReference>
<dbReference type="InterPro" id="IPR024909">
    <property type="entry name" value="Cys-tRNA/MSH_ligase"/>
</dbReference>
<dbReference type="InterPro" id="IPR056411">
    <property type="entry name" value="CysS_C"/>
</dbReference>
<dbReference type="InterPro" id="IPR014729">
    <property type="entry name" value="Rossmann-like_a/b/a_fold"/>
</dbReference>
<dbReference type="InterPro" id="IPR032678">
    <property type="entry name" value="tRNA-synt_1_cat_dom"/>
</dbReference>
<dbReference type="InterPro" id="IPR009080">
    <property type="entry name" value="tRNAsynth_Ia_anticodon-bd"/>
</dbReference>
<dbReference type="NCBIfam" id="TIGR00435">
    <property type="entry name" value="cysS"/>
    <property type="match status" value="1"/>
</dbReference>
<dbReference type="PANTHER" id="PTHR10890:SF3">
    <property type="entry name" value="CYSTEINE--TRNA LIGASE, CYTOPLASMIC"/>
    <property type="match status" value="1"/>
</dbReference>
<dbReference type="PANTHER" id="PTHR10890">
    <property type="entry name" value="CYSTEINYL-TRNA SYNTHETASE"/>
    <property type="match status" value="1"/>
</dbReference>
<dbReference type="Pfam" id="PF23493">
    <property type="entry name" value="CysS_C"/>
    <property type="match status" value="1"/>
</dbReference>
<dbReference type="Pfam" id="PF09190">
    <property type="entry name" value="DALR_2"/>
    <property type="match status" value="1"/>
</dbReference>
<dbReference type="Pfam" id="PF01406">
    <property type="entry name" value="tRNA-synt_1e"/>
    <property type="match status" value="1"/>
</dbReference>
<dbReference type="PRINTS" id="PR00983">
    <property type="entry name" value="TRNASYNTHCYS"/>
</dbReference>
<dbReference type="SMART" id="SM00840">
    <property type="entry name" value="DALR_2"/>
    <property type="match status" value="1"/>
</dbReference>
<dbReference type="SUPFAM" id="SSF47323">
    <property type="entry name" value="Anticodon-binding domain of a subclass of class I aminoacyl-tRNA synthetases"/>
    <property type="match status" value="1"/>
</dbReference>
<dbReference type="SUPFAM" id="SSF52374">
    <property type="entry name" value="Nucleotidylyl transferase"/>
    <property type="match status" value="1"/>
</dbReference>
<sequence>MLTIYNTLTKSKEVFKPLDGNKVRMYVCGMTVYDYCHLGHGRSMVAFDLITRWLRFSGYDLTYVRNITDIDDKIINRANENGEAFEALTERMIAAMHEDEARLNIKKPDMEPRATDHIPGMHTMIQTLIDKGYAYAPGNGDVYYRVGKFMGYGKLSRKKIEDLRIGARIEVDESKQDPLDFVLWKAAKPGEPSWPSPWGDGRPGWHIECSVMSTCCLGETFDIHGGGSDLEFPHHENEIAQSEAATGKTYANAWMHCGMIRINGEKMSKSLNNFFTIRDVLDKYHPEVVRYLLVASHYRSAINYSEDNLKDAKGALERFYHALKGLPKVAPAGGEAFVERFTQVMNDDFGTPEACAVLFEMVREINRLRESDIDAAAGLAARLKELASVLGVLQLEADDFLQAGAEGRVDGAQVEALIQARLAARANKDWAESDRIRDQITAMGVILEDGKGGTTWRLAD</sequence>
<organism>
    <name type="scientific">Pseudomonas fluorescens (strain ATCC BAA-477 / NRRL B-23932 / Pf-5)</name>
    <dbReference type="NCBI Taxonomy" id="220664"/>
    <lineage>
        <taxon>Bacteria</taxon>
        <taxon>Pseudomonadati</taxon>
        <taxon>Pseudomonadota</taxon>
        <taxon>Gammaproteobacteria</taxon>
        <taxon>Pseudomonadales</taxon>
        <taxon>Pseudomonadaceae</taxon>
        <taxon>Pseudomonas</taxon>
    </lineage>
</organism>
<feature type="chain" id="PRO_0000240936" description="Cysteine--tRNA ligase">
    <location>
        <begin position="1"/>
        <end position="460"/>
    </location>
</feature>
<feature type="short sequence motif" description="'HIGH' region">
    <location>
        <begin position="30"/>
        <end position="40"/>
    </location>
</feature>
<feature type="short sequence motif" description="'KMSKS' region">
    <location>
        <begin position="266"/>
        <end position="270"/>
    </location>
</feature>
<feature type="binding site" evidence="1">
    <location>
        <position position="28"/>
    </location>
    <ligand>
        <name>Zn(2+)</name>
        <dbReference type="ChEBI" id="CHEBI:29105"/>
    </ligand>
</feature>
<feature type="binding site" evidence="1">
    <location>
        <position position="209"/>
    </location>
    <ligand>
        <name>Zn(2+)</name>
        <dbReference type="ChEBI" id="CHEBI:29105"/>
    </ligand>
</feature>
<feature type="binding site" evidence="1">
    <location>
        <position position="234"/>
    </location>
    <ligand>
        <name>Zn(2+)</name>
        <dbReference type="ChEBI" id="CHEBI:29105"/>
    </ligand>
</feature>
<feature type="binding site" evidence="1">
    <location>
        <position position="238"/>
    </location>
    <ligand>
        <name>Zn(2+)</name>
        <dbReference type="ChEBI" id="CHEBI:29105"/>
    </ligand>
</feature>
<feature type="binding site" evidence="1">
    <location>
        <position position="269"/>
    </location>
    <ligand>
        <name>ATP</name>
        <dbReference type="ChEBI" id="CHEBI:30616"/>
    </ligand>
</feature>
<keyword id="KW-0030">Aminoacyl-tRNA synthetase</keyword>
<keyword id="KW-0067">ATP-binding</keyword>
<keyword id="KW-0963">Cytoplasm</keyword>
<keyword id="KW-0436">Ligase</keyword>
<keyword id="KW-0479">Metal-binding</keyword>
<keyword id="KW-0547">Nucleotide-binding</keyword>
<keyword id="KW-0648">Protein biosynthesis</keyword>
<keyword id="KW-0862">Zinc</keyword>
<proteinExistence type="inferred from homology"/>
<evidence type="ECO:0000255" key="1">
    <source>
        <dbReference type="HAMAP-Rule" id="MF_00041"/>
    </source>
</evidence>